<comment type="function">
    <text evidence="1">Aspartyl-tRNA synthetase with relaxed tRNA specificity since it is able to aspartylate not only its cognate tRNA(Asp) but also tRNA(Asn). Reaction proceeds in two steps: L-aspartate is first activated by ATP to form Asp-AMP and then transferred to the acceptor end of tRNA(Asp/Asn).</text>
</comment>
<comment type="catalytic activity">
    <reaction evidence="1">
        <text>tRNA(Asx) + L-aspartate + ATP = L-aspartyl-tRNA(Asx) + AMP + diphosphate</text>
        <dbReference type="Rhea" id="RHEA:18349"/>
        <dbReference type="Rhea" id="RHEA-COMP:9710"/>
        <dbReference type="Rhea" id="RHEA-COMP:9711"/>
        <dbReference type="ChEBI" id="CHEBI:29991"/>
        <dbReference type="ChEBI" id="CHEBI:30616"/>
        <dbReference type="ChEBI" id="CHEBI:33019"/>
        <dbReference type="ChEBI" id="CHEBI:78442"/>
        <dbReference type="ChEBI" id="CHEBI:78516"/>
        <dbReference type="ChEBI" id="CHEBI:456215"/>
        <dbReference type="EC" id="6.1.1.23"/>
    </reaction>
</comment>
<comment type="subunit">
    <text evidence="1">Homodimer.</text>
</comment>
<comment type="subcellular location">
    <subcellularLocation>
        <location evidence="1">Cytoplasm</location>
    </subcellularLocation>
</comment>
<comment type="similarity">
    <text evidence="1">Belongs to the class-II aminoacyl-tRNA synthetase family. Type 1 subfamily.</text>
</comment>
<name>SYDND_ACIF5</name>
<organism>
    <name type="scientific">Acidithiobacillus ferrooxidans (strain ATCC 53993 / BNL-5-31)</name>
    <name type="common">Leptospirillum ferrooxidans (ATCC 53993)</name>
    <dbReference type="NCBI Taxonomy" id="380394"/>
    <lineage>
        <taxon>Bacteria</taxon>
        <taxon>Pseudomonadati</taxon>
        <taxon>Pseudomonadota</taxon>
        <taxon>Acidithiobacillia</taxon>
        <taxon>Acidithiobacillales</taxon>
        <taxon>Acidithiobacillaceae</taxon>
        <taxon>Acidithiobacillus</taxon>
    </lineage>
</organism>
<proteinExistence type="inferred from homology"/>
<reference key="1">
    <citation type="submission" date="2008-08" db="EMBL/GenBank/DDBJ databases">
        <title>Complete sequence of Acidithiobacillus ferrooxidans ATCC 53993.</title>
        <authorList>
            <person name="Lucas S."/>
            <person name="Copeland A."/>
            <person name="Lapidus A."/>
            <person name="Glavina del Rio T."/>
            <person name="Dalin E."/>
            <person name="Tice H."/>
            <person name="Bruce D."/>
            <person name="Goodwin L."/>
            <person name="Pitluck S."/>
            <person name="Sims D."/>
            <person name="Brettin T."/>
            <person name="Detter J.C."/>
            <person name="Han C."/>
            <person name="Kuske C.R."/>
            <person name="Larimer F."/>
            <person name="Land M."/>
            <person name="Hauser L."/>
            <person name="Kyrpides N."/>
            <person name="Lykidis A."/>
            <person name="Borole A.P."/>
        </authorList>
    </citation>
    <scope>NUCLEOTIDE SEQUENCE [LARGE SCALE GENOMIC DNA]</scope>
    <source>
        <strain>ATCC 53993 / BNL-5-31</strain>
    </source>
</reference>
<gene>
    <name evidence="1" type="primary">aspS</name>
    <name type="ordered locus">Lferr_0057</name>
</gene>
<feature type="chain" id="PRO_1000090951" description="Aspartate--tRNA(Asp/Asn) ligase">
    <location>
        <begin position="1"/>
        <end position="596"/>
    </location>
</feature>
<feature type="region of interest" description="Aspartate" evidence="1">
    <location>
        <begin position="196"/>
        <end position="199"/>
    </location>
</feature>
<feature type="binding site" evidence="1">
    <location>
        <position position="172"/>
    </location>
    <ligand>
        <name>L-aspartate</name>
        <dbReference type="ChEBI" id="CHEBI:29991"/>
    </ligand>
</feature>
<feature type="binding site" evidence="1">
    <location>
        <begin position="218"/>
        <end position="220"/>
    </location>
    <ligand>
        <name>ATP</name>
        <dbReference type="ChEBI" id="CHEBI:30616"/>
    </ligand>
</feature>
<feature type="binding site" evidence="1">
    <location>
        <position position="218"/>
    </location>
    <ligand>
        <name>L-aspartate</name>
        <dbReference type="ChEBI" id="CHEBI:29991"/>
    </ligand>
</feature>
<feature type="binding site" evidence="1">
    <location>
        <position position="227"/>
    </location>
    <ligand>
        <name>ATP</name>
        <dbReference type="ChEBI" id="CHEBI:30616"/>
    </ligand>
</feature>
<feature type="binding site" evidence="1">
    <location>
        <position position="450"/>
    </location>
    <ligand>
        <name>L-aspartate</name>
        <dbReference type="ChEBI" id="CHEBI:29991"/>
    </ligand>
</feature>
<feature type="binding site" evidence="1">
    <location>
        <position position="484"/>
    </location>
    <ligand>
        <name>ATP</name>
        <dbReference type="ChEBI" id="CHEBI:30616"/>
    </ligand>
</feature>
<feature type="binding site" evidence="1">
    <location>
        <position position="491"/>
    </location>
    <ligand>
        <name>L-aspartate</name>
        <dbReference type="ChEBI" id="CHEBI:29991"/>
    </ligand>
</feature>
<feature type="binding site" evidence="1">
    <location>
        <begin position="536"/>
        <end position="539"/>
    </location>
    <ligand>
        <name>ATP</name>
        <dbReference type="ChEBI" id="CHEBI:30616"/>
    </ligand>
</feature>
<feature type="site" description="Important for tRNA non-discrimination" evidence="1">
    <location>
        <position position="30"/>
    </location>
</feature>
<feature type="site" description="Important for tRNA non-discrimination" evidence="1">
    <location>
        <position position="81"/>
    </location>
</feature>
<evidence type="ECO:0000255" key="1">
    <source>
        <dbReference type="HAMAP-Rule" id="MF_00044"/>
    </source>
</evidence>
<keyword id="KW-0030">Aminoacyl-tRNA synthetase</keyword>
<keyword id="KW-0067">ATP-binding</keyword>
<keyword id="KW-0963">Cytoplasm</keyword>
<keyword id="KW-0436">Ligase</keyword>
<keyword id="KW-0547">Nucleotide-binding</keyword>
<keyword id="KW-0648">Protein biosynthesis</keyword>
<protein>
    <recommendedName>
        <fullName evidence="1">Aspartate--tRNA(Asp/Asn) ligase</fullName>
        <ecNumber evidence="1">6.1.1.23</ecNumber>
    </recommendedName>
    <alternativeName>
        <fullName evidence="1">Aspartyl-tRNA synthetase</fullName>
        <shortName evidence="1">AspRS</shortName>
    </alternativeName>
    <alternativeName>
        <fullName evidence="1">Non-discriminating aspartyl-tRNA synthetase</fullName>
        <shortName evidence="1">ND-AspRS</shortName>
    </alternativeName>
</protein>
<sequence length="596" mass="66372">MRTHYCNGIHEGLIGQTVTLCGWAQRRRDHGGVIFIDLRDREGLVQIVADPDQVDAFAAANECRSEFVLQVEGVLRARPAGTENPHMPSGKVELAAARIRILNRSEPVPFPLDEEDIAENLRLKYRYLDLRRPEMLHRLRLRHQVTRFVRGYLDNAGFIDVETPVLTRSTPEGARDYLVPSRTQPGHFFALPQSPQLFKQLLMVAGLDRYYQITKCFRDEDLRADRQPEFTQIDIEASFVDEEAVMGTAEPMIRGLFAEVLGVQLPDPFPRMTYRDAMHRFGVDRPDLRNPLELTELTDLMRAVDFKVFREAAERPHGRVACLRVPGGAQLSRAQIDAYTQFTAIYGARGLAWIKVNALDQGNEGLQSPIVKFLPEMVLSEILRRSGAAAGDILFFGADTAKIVNEALGNLRNRVAADLGLLEGEWCPVWITDFPMFDYDDKEDRWTSTHHPFTAPQTEHLETLGQDPGNALARAYDLVLNGNEIGGGSIRIHQEAVQEKVFAALGIGAEEARDKFGFLLDALHYGAPPHGGLAFGLDRLVMLLCGAETIRDVIAFPKTQKAGCLLTEAPGTVADKQLQELGIRLRPGVGGGVPNP</sequence>
<accession>B5EJL3</accession>
<dbReference type="EC" id="6.1.1.23" evidence="1"/>
<dbReference type="EMBL" id="CP001132">
    <property type="protein sequence ID" value="ACH82319.1"/>
    <property type="molecule type" value="Genomic_DNA"/>
</dbReference>
<dbReference type="RefSeq" id="WP_012535765.1">
    <property type="nucleotide sequence ID" value="NC_011206.1"/>
</dbReference>
<dbReference type="SMR" id="B5EJL3"/>
<dbReference type="GeneID" id="65279455"/>
<dbReference type="KEGG" id="afe:Lferr_0057"/>
<dbReference type="eggNOG" id="COG0173">
    <property type="taxonomic scope" value="Bacteria"/>
</dbReference>
<dbReference type="HOGENOM" id="CLU_014330_3_2_6"/>
<dbReference type="GO" id="GO:0005737">
    <property type="term" value="C:cytoplasm"/>
    <property type="evidence" value="ECO:0007669"/>
    <property type="project" value="UniProtKB-SubCell"/>
</dbReference>
<dbReference type="GO" id="GO:0004815">
    <property type="term" value="F:aspartate-tRNA ligase activity"/>
    <property type="evidence" value="ECO:0007669"/>
    <property type="project" value="UniProtKB-UniRule"/>
</dbReference>
<dbReference type="GO" id="GO:0050560">
    <property type="term" value="F:aspartate-tRNA(Asn) ligase activity"/>
    <property type="evidence" value="ECO:0007669"/>
    <property type="project" value="UniProtKB-EC"/>
</dbReference>
<dbReference type="GO" id="GO:0005524">
    <property type="term" value="F:ATP binding"/>
    <property type="evidence" value="ECO:0007669"/>
    <property type="project" value="UniProtKB-UniRule"/>
</dbReference>
<dbReference type="GO" id="GO:0003676">
    <property type="term" value="F:nucleic acid binding"/>
    <property type="evidence" value="ECO:0007669"/>
    <property type="project" value="InterPro"/>
</dbReference>
<dbReference type="GO" id="GO:0006422">
    <property type="term" value="P:aspartyl-tRNA aminoacylation"/>
    <property type="evidence" value="ECO:0007669"/>
    <property type="project" value="UniProtKB-UniRule"/>
</dbReference>
<dbReference type="CDD" id="cd00777">
    <property type="entry name" value="AspRS_core"/>
    <property type="match status" value="1"/>
</dbReference>
<dbReference type="CDD" id="cd04317">
    <property type="entry name" value="EcAspRS_like_N"/>
    <property type="match status" value="1"/>
</dbReference>
<dbReference type="Gene3D" id="3.30.930.10">
    <property type="entry name" value="Bira Bifunctional Protein, Domain 2"/>
    <property type="match status" value="1"/>
</dbReference>
<dbReference type="Gene3D" id="3.30.1360.30">
    <property type="entry name" value="GAD-like domain"/>
    <property type="match status" value="1"/>
</dbReference>
<dbReference type="Gene3D" id="2.40.50.140">
    <property type="entry name" value="Nucleic acid-binding proteins"/>
    <property type="match status" value="1"/>
</dbReference>
<dbReference type="HAMAP" id="MF_00044">
    <property type="entry name" value="Asp_tRNA_synth_type1"/>
    <property type="match status" value="1"/>
</dbReference>
<dbReference type="InterPro" id="IPR004364">
    <property type="entry name" value="Aa-tRNA-synt_II"/>
</dbReference>
<dbReference type="InterPro" id="IPR006195">
    <property type="entry name" value="aa-tRNA-synth_II"/>
</dbReference>
<dbReference type="InterPro" id="IPR045864">
    <property type="entry name" value="aa-tRNA-synth_II/BPL/LPL"/>
</dbReference>
<dbReference type="InterPro" id="IPR004524">
    <property type="entry name" value="Asp-tRNA-ligase_1"/>
</dbReference>
<dbReference type="InterPro" id="IPR047089">
    <property type="entry name" value="Asp-tRNA-ligase_1_N"/>
</dbReference>
<dbReference type="InterPro" id="IPR002312">
    <property type="entry name" value="Asp/Asn-tRNA-synth_IIb"/>
</dbReference>
<dbReference type="InterPro" id="IPR047090">
    <property type="entry name" value="AspRS_core"/>
</dbReference>
<dbReference type="InterPro" id="IPR004115">
    <property type="entry name" value="GAD-like_sf"/>
</dbReference>
<dbReference type="InterPro" id="IPR029351">
    <property type="entry name" value="GAD_dom"/>
</dbReference>
<dbReference type="InterPro" id="IPR012340">
    <property type="entry name" value="NA-bd_OB-fold"/>
</dbReference>
<dbReference type="InterPro" id="IPR004365">
    <property type="entry name" value="NA-bd_OB_tRNA"/>
</dbReference>
<dbReference type="NCBIfam" id="TIGR00459">
    <property type="entry name" value="aspS_bact"/>
    <property type="match status" value="1"/>
</dbReference>
<dbReference type="NCBIfam" id="NF001750">
    <property type="entry name" value="PRK00476.1"/>
    <property type="match status" value="1"/>
</dbReference>
<dbReference type="PANTHER" id="PTHR22594:SF5">
    <property type="entry name" value="ASPARTATE--TRNA LIGASE, MITOCHONDRIAL"/>
    <property type="match status" value="1"/>
</dbReference>
<dbReference type="PANTHER" id="PTHR22594">
    <property type="entry name" value="ASPARTYL/LYSYL-TRNA SYNTHETASE"/>
    <property type="match status" value="1"/>
</dbReference>
<dbReference type="Pfam" id="PF02938">
    <property type="entry name" value="GAD"/>
    <property type="match status" value="1"/>
</dbReference>
<dbReference type="Pfam" id="PF00152">
    <property type="entry name" value="tRNA-synt_2"/>
    <property type="match status" value="1"/>
</dbReference>
<dbReference type="Pfam" id="PF01336">
    <property type="entry name" value="tRNA_anti-codon"/>
    <property type="match status" value="1"/>
</dbReference>
<dbReference type="PRINTS" id="PR01042">
    <property type="entry name" value="TRNASYNTHASP"/>
</dbReference>
<dbReference type="SUPFAM" id="SSF55681">
    <property type="entry name" value="Class II aaRS and biotin synthetases"/>
    <property type="match status" value="1"/>
</dbReference>
<dbReference type="SUPFAM" id="SSF55261">
    <property type="entry name" value="GAD domain-like"/>
    <property type="match status" value="1"/>
</dbReference>
<dbReference type="SUPFAM" id="SSF50249">
    <property type="entry name" value="Nucleic acid-binding proteins"/>
    <property type="match status" value="1"/>
</dbReference>
<dbReference type="PROSITE" id="PS50862">
    <property type="entry name" value="AA_TRNA_LIGASE_II"/>
    <property type="match status" value="1"/>
</dbReference>